<comment type="function">
    <text evidence="1">DNA-dependent RNA polymerase (RNAP) catalyzes the transcription of DNA into RNA using the four ribonucleoside triphosphates as substrates.</text>
</comment>
<comment type="catalytic activity">
    <reaction evidence="1">
        <text>RNA(n) + a ribonucleoside 5'-triphosphate = RNA(n+1) + diphosphate</text>
        <dbReference type="Rhea" id="RHEA:21248"/>
        <dbReference type="Rhea" id="RHEA-COMP:14527"/>
        <dbReference type="Rhea" id="RHEA-COMP:17342"/>
        <dbReference type="ChEBI" id="CHEBI:33019"/>
        <dbReference type="ChEBI" id="CHEBI:61557"/>
        <dbReference type="ChEBI" id="CHEBI:140395"/>
        <dbReference type="EC" id="2.7.7.6"/>
    </reaction>
</comment>
<comment type="cofactor">
    <cofactor evidence="1">
        <name>Zn(2+)</name>
        <dbReference type="ChEBI" id="CHEBI:29105"/>
    </cofactor>
    <text evidence="1">Binds 1 zinc ion.</text>
</comment>
<comment type="subunit">
    <text evidence="1">Part of the RNA polymerase complex.</text>
</comment>
<comment type="subcellular location">
    <subcellularLocation>
        <location evidence="1">Cytoplasm</location>
    </subcellularLocation>
</comment>
<comment type="similarity">
    <text evidence="1">Belongs to the archaeal Rpo10/eukaryotic RPB10 RNA polymerase subunit family.</text>
</comment>
<feature type="chain" id="PRO_0000121354" description="DNA-directed RNA polymerase subunit Rpo10">
    <location>
        <begin position="1"/>
        <end position="65"/>
    </location>
</feature>
<feature type="binding site" evidence="1">
    <location>
        <position position="7"/>
    </location>
    <ligand>
        <name>Zn(2+)</name>
        <dbReference type="ChEBI" id="CHEBI:29105"/>
    </ligand>
</feature>
<feature type="binding site" evidence="1">
    <location>
        <position position="10"/>
    </location>
    <ligand>
        <name>Zn(2+)</name>
        <dbReference type="ChEBI" id="CHEBI:29105"/>
    </ligand>
</feature>
<feature type="binding site" evidence="1">
    <location>
        <position position="44"/>
    </location>
    <ligand>
        <name>Zn(2+)</name>
        <dbReference type="ChEBI" id="CHEBI:29105"/>
    </ligand>
</feature>
<feature type="binding site" evidence="1">
    <location>
        <position position="45"/>
    </location>
    <ligand>
        <name>Zn(2+)</name>
        <dbReference type="ChEBI" id="CHEBI:29105"/>
    </ligand>
</feature>
<sequence length="65" mass="7491">MLPPIRCFSCGKPLGHLWEEFNERVNKGEDPKKVLDDLGLERYCCRRTLLSAVVVFPVIAKFKKV</sequence>
<proteinExistence type="inferred from homology"/>
<evidence type="ECO:0000255" key="1">
    <source>
        <dbReference type="HAMAP-Rule" id="MF_00250"/>
    </source>
</evidence>
<dbReference type="EC" id="2.7.7.6" evidence="1"/>
<dbReference type="EMBL" id="AE017199">
    <property type="protein sequence ID" value="AAR39185.1"/>
    <property type="molecule type" value="Genomic_DNA"/>
</dbReference>
<dbReference type="SMR" id="Q74MB5"/>
<dbReference type="STRING" id="228908.NEQ338"/>
<dbReference type="EnsemblBacteria" id="AAR39185">
    <property type="protein sequence ID" value="AAR39185"/>
    <property type="gene ID" value="NEQ338"/>
</dbReference>
<dbReference type="KEGG" id="neq:NEQ338"/>
<dbReference type="PATRIC" id="fig|228908.8.peg.345"/>
<dbReference type="HOGENOM" id="CLU_143122_1_1_2"/>
<dbReference type="Proteomes" id="UP000000578">
    <property type="component" value="Chromosome"/>
</dbReference>
<dbReference type="GO" id="GO:0005737">
    <property type="term" value="C:cytoplasm"/>
    <property type="evidence" value="ECO:0007669"/>
    <property type="project" value="UniProtKB-SubCell"/>
</dbReference>
<dbReference type="GO" id="GO:0000428">
    <property type="term" value="C:DNA-directed RNA polymerase complex"/>
    <property type="evidence" value="ECO:0007669"/>
    <property type="project" value="UniProtKB-KW"/>
</dbReference>
<dbReference type="GO" id="GO:0003677">
    <property type="term" value="F:DNA binding"/>
    <property type="evidence" value="ECO:0007669"/>
    <property type="project" value="InterPro"/>
</dbReference>
<dbReference type="GO" id="GO:0003899">
    <property type="term" value="F:DNA-directed RNA polymerase activity"/>
    <property type="evidence" value="ECO:0007669"/>
    <property type="project" value="UniProtKB-UniRule"/>
</dbReference>
<dbReference type="GO" id="GO:0008270">
    <property type="term" value="F:zinc ion binding"/>
    <property type="evidence" value="ECO:0007669"/>
    <property type="project" value="UniProtKB-UniRule"/>
</dbReference>
<dbReference type="GO" id="GO:0006351">
    <property type="term" value="P:DNA-templated transcription"/>
    <property type="evidence" value="ECO:0007669"/>
    <property type="project" value="UniProtKB-UniRule"/>
</dbReference>
<dbReference type="Gene3D" id="1.10.10.60">
    <property type="entry name" value="Homeodomain-like"/>
    <property type="match status" value="1"/>
</dbReference>
<dbReference type="HAMAP" id="MF_00250">
    <property type="entry name" value="RNApol_arch_Rpo10"/>
    <property type="match status" value="1"/>
</dbReference>
<dbReference type="InterPro" id="IPR023580">
    <property type="entry name" value="RNA_pol_su_RPB10"/>
</dbReference>
<dbReference type="InterPro" id="IPR020789">
    <property type="entry name" value="RNA_pol_suN_Zn-BS"/>
</dbReference>
<dbReference type="InterPro" id="IPR000268">
    <property type="entry name" value="RPABC5/Rpb10"/>
</dbReference>
<dbReference type="NCBIfam" id="NF003089">
    <property type="entry name" value="PRK04016.1"/>
    <property type="match status" value="1"/>
</dbReference>
<dbReference type="PANTHER" id="PTHR23431:SF3">
    <property type="entry name" value="DNA-DIRECTED RNA POLYMERASES I, II, AND III SUBUNIT RPABC5"/>
    <property type="match status" value="1"/>
</dbReference>
<dbReference type="PANTHER" id="PTHR23431">
    <property type="entry name" value="DNA-DIRECTED RNA POLYMERASES I, II, AND III SUBUNIT RPABC5 FAMILY MEMBER"/>
    <property type="match status" value="1"/>
</dbReference>
<dbReference type="Pfam" id="PF01194">
    <property type="entry name" value="RNA_pol_N"/>
    <property type="match status" value="1"/>
</dbReference>
<dbReference type="PIRSF" id="PIRSF005653">
    <property type="entry name" value="RNA_pol_N/8_sub"/>
    <property type="match status" value="1"/>
</dbReference>
<dbReference type="SUPFAM" id="SSF46924">
    <property type="entry name" value="RNA polymerase subunit RPB10"/>
    <property type="match status" value="1"/>
</dbReference>
<dbReference type="PROSITE" id="PS01112">
    <property type="entry name" value="RNA_POL_N_8KD"/>
    <property type="match status" value="1"/>
</dbReference>
<gene>
    <name evidence="1" type="primary">rpo10</name>
    <name evidence="1" type="synonym">rpoN</name>
    <name type="ordered locus">NEQ338</name>
</gene>
<accession>Q74MB5</accession>
<keyword id="KW-0963">Cytoplasm</keyword>
<keyword id="KW-0240">DNA-directed RNA polymerase</keyword>
<keyword id="KW-0479">Metal-binding</keyword>
<keyword id="KW-0548">Nucleotidyltransferase</keyword>
<keyword id="KW-1185">Reference proteome</keyword>
<keyword id="KW-0804">Transcription</keyword>
<keyword id="KW-0808">Transferase</keyword>
<keyword id="KW-0862">Zinc</keyword>
<reference key="1">
    <citation type="journal article" date="2003" name="Proc. Natl. Acad. Sci. U.S.A.">
        <title>The genome of Nanoarchaeum equitans: insights into early archaeal evolution and derived parasitism.</title>
        <authorList>
            <person name="Waters E."/>
            <person name="Hohn M.J."/>
            <person name="Ahel I."/>
            <person name="Graham D.E."/>
            <person name="Adams M.D."/>
            <person name="Barnstead M."/>
            <person name="Beeson K.Y."/>
            <person name="Bibbs L."/>
            <person name="Bolanos R."/>
            <person name="Keller M."/>
            <person name="Kretz K."/>
            <person name="Lin X."/>
            <person name="Mathur E."/>
            <person name="Ni J."/>
            <person name="Podar M."/>
            <person name="Richardson T."/>
            <person name="Sutton G.G."/>
            <person name="Simon M."/>
            <person name="Soell D."/>
            <person name="Stetter K.O."/>
            <person name="Short J.M."/>
            <person name="Noorderwier M."/>
        </authorList>
    </citation>
    <scope>NUCLEOTIDE SEQUENCE [LARGE SCALE GENOMIC DNA]</scope>
    <source>
        <strain>Kin4-M</strain>
    </source>
</reference>
<organism>
    <name type="scientific">Nanoarchaeum equitans (strain Kin4-M)</name>
    <dbReference type="NCBI Taxonomy" id="228908"/>
    <lineage>
        <taxon>Archaea</taxon>
        <taxon>Nanobdellota</taxon>
        <taxon>Candidatus Nanoarchaeia</taxon>
        <taxon>Nanoarchaeales</taxon>
        <taxon>Nanoarchaeaceae</taxon>
        <taxon>Nanoarchaeum</taxon>
    </lineage>
</organism>
<name>RPO10_NANEQ</name>
<protein>
    <recommendedName>
        <fullName evidence="1">DNA-directed RNA polymerase subunit Rpo10</fullName>
        <ecNumber evidence="1">2.7.7.6</ecNumber>
    </recommendedName>
    <alternativeName>
        <fullName evidence="1">DNA-directed RNA polymerase subunit N</fullName>
    </alternativeName>
</protein>